<dbReference type="EMBL" id="D26469">
    <property type="protein sequence ID" value="BAA05483.1"/>
    <property type="molecule type" value="Genomic_DNA"/>
</dbReference>
<dbReference type="EMBL" id="AE005674">
    <property type="protein sequence ID" value="AAN42002.1"/>
    <property type="molecule type" value="Genomic_DNA"/>
</dbReference>
<dbReference type="EMBL" id="AE014073">
    <property type="protein sequence ID" value="AAP15879.1"/>
    <property type="molecule type" value="Genomic_DNA"/>
</dbReference>
<dbReference type="RefSeq" id="NP_706295.1">
    <property type="nucleotide sequence ID" value="NC_004337.2"/>
</dbReference>
<dbReference type="RefSeq" id="WP_000007629.1">
    <property type="nucleotide sequence ID" value="NZ_WPGW01000023.1"/>
</dbReference>
<dbReference type="SMR" id="P0AE00"/>
<dbReference type="STRING" id="198214.SF0344"/>
<dbReference type="PaxDb" id="198214-SF0344"/>
<dbReference type="GeneID" id="1027685"/>
<dbReference type="GeneID" id="93777053"/>
<dbReference type="KEGG" id="sfl:SF0344"/>
<dbReference type="KEGG" id="sfx:S0352"/>
<dbReference type="PATRIC" id="fig|198214.7.peg.395"/>
<dbReference type="HOGENOM" id="CLU_116157_2_1_6"/>
<dbReference type="Proteomes" id="UP000001006">
    <property type="component" value="Chromosome"/>
</dbReference>
<dbReference type="Proteomes" id="UP000002673">
    <property type="component" value="Chromosome"/>
</dbReference>
<dbReference type="GO" id="GO:0005886">
    <property type="term" value="C:plasma membrane"/>
    <property type="evidence" value="ECO:0007669"/>
    <property type="project" value="UniProtKB-SubCell"/>
</dbReference>
<dbReference type="GO" id="GO:0015031">
    <property type="term" value="P:protein transport"/>
    <property type="evidence" value="ECO:0007669"/>
    <property type="project" value="UniProtKB-KW"/>
</dbReference>
<dbReference type="InterPro" id="IPR003849">
    <property type="entry name" value="Preprotein_translocase_YajC"/>
</dbReference>
<dbReference type="NCBIfam" id="TIGR00739">
    <property type="entry name" value="yajC"/>
    <property type="match status" value="1"/>
</dbReference>
<dbReference type="PANTHER" id="PTHR33909">
    <property type="entry name" value="SEC TRANSLOCON ACCESSORY COMPLEX SUBUNIT YAJC"/>
    <property type="match status" value="1"/>
</dbReference>
<dbReference type="PANTHER" id="PTHR33909:SF1">
    <property type="entry name" value="SEC TRANSLOCON ACCESSORY COMPLEX SUBUNIT YAJC"/>
    <property type="match status" value="1"/>
</dbReference>
<dbReference type="Pfam" id="PF02699">
    <property type="entry name" value="YajC"/>
    <property type="match status" value="1"/>
</dbReference>
<dbReference type="PRINTS" id="PR01853">
    <property type="entry name" value="YAJCTRNLCASE"/>
</dbReference>
<dbReference type="SMART" id="SM01323">
    <property type="entry name" value="YajC"/>
    <property type="match status" value="1"/>
</dbReference>
<gene>
    <name type="primary">yajC</name>
    <name type="ordered locus">SF0344</name>
    <name type="ordered locus">S0352</name>
</gene>
<feature type="chain" id="PRO_0000097016" description="Sec translocon accessory complex subunit YajC">
    <location>
        <begin position="1"/>
        <end position="110"/>
    </location>
</feature>
<feature type="transmembrane region" description="Helical" evidence="2">
    <location>
        <begin position="19"/>
        <end position="39"/>
    </location>
</feature>
<reference key="1">
    <citation type="journal article" date="1994" name="J. Bacteriol.">
        <title>vacC, a virulence-associated chromosomal locus of Shigella flexneri, is homologous to tgt, a gene encoding tRNA-guanine transglycosylase (Tgt) of Escherichia coli K-12.</title>
        <authorList>
            <person name="Durand J.M."/>
            <person name="Okada N."/>
            <person name="Tobe T."/>
            <person name="Watarai M."/>
            <person name="Fukuda I."/>
            <person name="Suzuki T."/>
            <person name="Nakata N."/>
            <person name="Komatsu K."/>
            <person name="Yoshikawa M."/>
            <person name="Sasakawa C."/>
        </authorList>
    </citation>
    <scope>NUCLEOTIDE SEQUENCE [GENOMIC DNA]</scope>
    <source>
        <strain>YSH6000 / Serotype 2a</strain>
    </source>
</reference>
<reference key="2">
    <citation type="journal article" date="2002" name="Nucleic Acids Res.">
        <title>Genome sequence of Shigella flexneri 2a: insights into pathogenicity through comparison with genomes of Escherichia coli K12 and O157.</title>
        <authorList>
            <person name="Jin Q."/>
            <person name="Yuan Z."/>
            <person name="Xu J."/>
            <person name="Wang Y."/>
            <person name="Shen Y."/>
            <person name="Lu W."/>
            <person name="Wang J."/>
            <person name="Liu H."/>
            <person name="Yang J."/>
            <person name="Yang F."/>
            <person name="Zhang X."/>
            <person name="Zhang J."/>
            <person name="Yang G."/>
            <person name="Wu H."/>
            <person name="Qu D."/>
            <person name="Dong J."/>
            <person name="Sun L."/>
            <person name="Xue Y."/>
            <person name="Zhao A."/>
            <person name="Gao Y."/>
            <person name="Zhu J."/>
            <person name="Kan B."/>
            <person name="Ding K."/>
            <person name="Chen S."/>
            <person name="Cheng H."/>
            <person name="Yao Z."/>
            <person name="He B."/>
            <person name="Chen R."/>
            <person name="Ma D."/>
            <person name="Qiang B."/>
            <person name="Wen Y."/>
            <person name="Hou Y."/>
            <person name="Yu J."/>
        </authorList>
    </citation>
    <scope>NUCLEOTIDE SEQUENCE [LARGE SCALE GENOMIC DNA]</scope>
    <source>
        <strain>301 / Serotype 2a</strain>
    </source>
</reference>
<reference key="3">
    <citation type="journal article" date="2003" name="Infect. Immun.">
        <title>Complete genome sequence and comparative genomics of Shigella flexneri serotype 2a strain 2457T.</title>
        <authorList>
            <person name="Wei J."/>
            <person name="Goldberg M.B."/>
            <person name="Burland V."/>
            <person name="Venkatesan M.M."/>
            <person name="Deng W."/>
            <person name="Fournier G."/>
            <person name="Mayhew G.F."/>
            <person name="Plunkett G. III"/>
            <person name="Rose D.J."/>
            <person name="Darling A."/>
            <person name="Mau B."/>
            <person name="Perna N.T."/>
            <person name="Payne S.M."/>
            <person name="Runyen-Janecky L.J."/>
            <person name="Zhou S."/>
            <person name="Schwartz D.C."/>
            <person name="Blattner F.R."/>
        </authorList>
    </citation>
    <scope>NUCLEOTIDE SEQUENCE [LARGE SCALE GENOMIC DNA]</scope>
    <source>
        <strain>ATCC 700930 / 2457T / Serotype 2a</strain>
    </source>
</reference>
<name>YAJC_SHIFL</name>
<proteinExistence type="inferred from homology"/>
<evidence type="ECO:0000250" key="1">
    <source>
        <dbReference type="UniProtKB" id="P0ADZ7"/>
    </source>
</evidence>
<evidence type="ECO:0000255" key="2"/>
<evidence type="ECO:0000305" key="3"/>
<organism>
    <name type="scientific">Shigella flexneri</name>
    <dbReference type="NCBI Taxonomy" id="623"/>
    <lineage>
        <taxon>Bacteria</taxon>
        <taxon>Pseudomonadati</taxon>
        <taxon>Pseudomonadota</taxon>
        <taxon>Gammaproteobacteria</taxon>
        <taxon>Enterobacterales</taxon>
        <taxon>Enterobacteriaceae</taxon>
        <taxon>Shigella</taxon>
    </lineage>
</organism>
<protein>
    <recommendedName>
        <fullName>Sec translocon accessory complex subunit YajC</fullName>
    </recommendedName>
</protein>
<accession>P0AE00</accession>
<accession>P19677</accession>
<sequence length="110" mass="11887">MSFFISDAVAATGAPAQGSPMSLILMLVVFGLIFYFMILRPQQKRTKEHKKLMDSIAKGDEVLTNGGLVGRVTKVAENGYIAIALNDTTEVVIKRDFVAAVLPKGTMKAL</sequence>
<keyword id="KW-0997">Cell inner membrane</keyword>
<keyword id="KW-1003">Cell membrane</keyword>
<keyword id="KW-0472">Membrane</keyword>
<keyword id="KW-0653">Protein transport</keyword>
<keyword id="KW-1185">Reference proteome</keyword>
<keyword id="KW-0811">Translocation</keyword>
<keyword id="KW-0812">Transmembrane</keyword>
<keyword id="KW-1133">Transmembrane helix</keyword>
<keyword id="KW-0813">Transport</keyword>
<comment type="function">
    <text evidence="1">The SecYEG-SecDF-YajC-YidC holo-translocon (HTL) protein secretase/insertase is a supercomplex required for protein secretion, insertion of proteins into membranes, and assembly of membrane protein complexes. While the SecYEG complex is essential for assembly of a number of proteins and complexes, the SecDF-YajC-YidC subcomplex facilitates these functions.</text>
</comment>
<comment type="subunit">
    <text evidence="1">Part of the SecDF-YidC-YajC translocase complex. The SecDF-YidC-YajC translocase forms a supercomplex with SecYEG, called the holo-translocon (HTL).</text>
</comment>
<comment type="subcellular location">
    <subcellularLocation>
        <location evidence="1">Cell inner membrane</location>
        <topology evidence="1">Single-pass membrane protein</topology>
    </subcellularLocation>
</comment>
<comment type="similarity">
    <text evidence="3">Belongs to the YajC family.</text>
</comment>